<dbReference type="EMBL" id="AL939111">
    <property type="protein sequence ID" value="CAD55294.1"/>
    <property type="status" value="ALT_INIT"/>
    <property type="molecule type" value="Genomic_DNA"/>
</dbReference>
<dbReference type="EMBL" id="X65932">
    <property type="protein sequence ID" value="CAA46725.1"/>
    <property type="molecule type" value="Genomic_DNA"/>
</dbReference>
<dbReference type="PIR" id="T35509">
    <property type="entry name" value="T35509"/>
</dbReference>
<dbReference type="RefSeq" id="NP_733559.1">
    <property type="nucleotide sequence ID" value="NC_003888.3"/>
</dbReference>
<dbReference type="RefSeq" id="WP_003976687.1">
    <property type="nucleotide sequence ID" value="NZ_VNID01000001.1"/>
</dbReference>
<dbReference type="SMR" id="P40181"/>
<dbReference type="STRING" id="100226.gene:17759726"/>
<dbReference type="PaxDb" id="100226-SCO2128"/>
<dbReference type="KEGG" id="sco:SCO2128"/>
<dbReference type="PATRIC" id="fig|100226.15.peg.2163"/>
<dbReference type="eggNOG" id="COG0003">
    <property type="taxonomic scope" value="Bacteria"/>
</dbReference>
<dbReference type="HOGENOM" id="CLU_040761_1_0_11"/>
<dbReference type="InParanoid" id="P40181"/>
<dbReference type="OrthoDB" id="9780677at2"/>
<dbReference type="Proteomes" id="UP000001973">
    <property type="component" value="Chromosome"/>
</dbReference>
<dbReference type="GO" id="GO:0005524">
    <property type="term" value="F:ATP binding"/>
    <property type="evidence" value="ECO:0007669"/>
    <property type="project" value="InterPro"/>
</dbReference>
<dbReference type="GO" id="GO:0016887">
    <property type="term" value="F:ATP hydrolysis activity"/>
    <property type="evidence" value="ECO:0000318"/>
    <property type="project" value="GO_Central"/>
</dbReference>
<dbReference type="FunFam" id="2.60.40.790:FF:000052">
    <property type="entry name" value="ArsA family ATPase"/>
    <property type="match status" value="1"/>
</dbReference>
<dbReference type="Gene3D" id="2.60.40.790">
    <property type="match status" value="1"/>
</dbReference>
<dbReference type="Gene3D" id="3.40.50.300">
    <property type="entry name" value="P-loop containing nucleotide triphosphate hydrolases"/>
    <property type="match status" value="1"/>
</dbReference>
<dbReference type="InterPro" id="IPR025723">
    <property type="entry name" value="Anion-transp_ATPase-like_dom"/>
</dbReference>
<dbReference type="InterPro" id="IPR040612">
    <property type="entry name" value="ArsA_HSP20-like"/>
</dbReference>
<dbReference type="InterPro" id="IPR016300">
    <property type="entry name" value="ATPase_ArsA/GET3"/>
</dbReference>
<dbReference type="InterPro" id="IPR008978">
    <property type="entry name" value="HSP20-like_chaperone"/>
</dbReference>
<dbReference type="InterPro" id="IPR027417">
    <property type="entry name" value="P-loop_NTPase"/>
</dbReference>
<dbReference type="PANTHER" id="PTHR10803">
    <property type="entry name" value="ARSENICAL PUMP-DRIVING ATPASE ARSENITE-TRANSLOCATING ATPASE"/>
    <property type="match status" value="1"/>
</dbReference>
<dbReference type="PANTHER" id="PTHR10803:SF3">
    <property type="entry name" value="ATPASE GET3"/>
    <property type="match status" value="1"/>
</dbReference>
<dbReference type="Pfam" id="PF02374">
    <property type="entry name" value="ArsA_ATPase"/>
    <property type="match status" value="1"/>
</dbReference>
<dbReference type="Pfam" id="PF17886">
    <property type="entry name" value="ArsA_HSP20"/>
    <property type="match status" value="1"/>
</dbReference>
<dbReference type="SUPFAM" id="SSF52540">
    <property type="entry name" value="P-loop containing nucleoside triphosphate hydrolases"/>
    <property type="match status" value="1"/>
</dbReference>
<protein>
    <recommendedName>
        <fullName>Uncharacterized protein SCO2128</fullName>
    </recommendedName>
</protein>
<keyword id="KW-1185">Reference proteome</keyword>
<reference key="1">
    <citation type="journal article" date="2002" name="Nature">
        <title>Complete genome sequence of the model actinomycete Streptomyces coelicolor A3(2).</title>
        <authorList>
            <person name="Bentley S.D."/>
            <person name="Chater K.F."/>
            <person name="Cerdeno-Tarraga A.-M."/>
            <person name="Challis G.L."/>
            <person name="Thomson N.R."/>
            <person name="James K.D."/>
            <person name="Harris D.E."/>
            <person name="Quail M.A."/>
            <person name="Kieser H."/>
            <person name="Harper D."/>
            <person name="Bateman A."/>
            <person name="Brown S."/>
            <person name="Chandra G."/>
            <person name="Chen C.W."/>
            <person name="Collins M."/>
            <person name="Cronin A."/>
            <person name="Fraser A."/>
            <person name="Goble A."/>
            <person name="Hidalgo J."/>
            <person name="Hornsby T."/>
            <person name="Howarth S."/>
            <person name="Huang C.-H."/>
            <person name="Kieser T."/>
            <person name="Larke L."/>
            <person name="Murphy L.D."/>
            <person name="Oliver K."/>
            <person name="O'Neil S."/>
            <person name="Rabbinowitsch E."/>
            <person name="Rajandream M.A."/>
            <person name="Rutherford K.M."/>
            <person name="Rutter S."/>
            <person name="Seeger K."/>
            <person name="Saunders D."/>
            <person name="Sharp S."/>
            <person name="Squares R."/>
            <person name="Squares S."/>
            <person name="Taylor K."/>
            <person name="Warren T."/>
            <person name="Wietzorrek A."/>
            <person name="Woodward J.R."/>
            <person name="Barrell B.G."/>
            <person name="Parkhill J."/>
            <person name="Hopwood D.A."/>
        </authorList>
    </citation>
    <scope>NUCLEOTIDE SEQUENCE [LARGE SCALE GENOMIC DNA]</scope>
    <source>
        <strain>ATCC BAA-471 / A3(2) / M145</strain>
    </source>
</reference>
<reference key="2">
    <citation type="journal article" date="1992" name="Mol. Microbiol.">
        <title>The glucose kinase gene of Streptomyces coelicolor A3(2): its nucleotide sequence, transcriptional analysis and role in glucose repression.</title>
        <authorList>
            <person name="Angell S."/>
            <person name="Schwarz E."/>
            <person name="Bibb M.J."/>
        </authorList>
    </citation>
    <scope>NUCLEOTIDE SEQUENCE [GENOMIC DNA] OF 50-390</scope>
    <source>
        <strain>A3(2) / NRRL B-16638</strain>
    </source>
</reference>
<accession>P40181</accession>
<accession>Q9S2L8</accession>
<name>Y2128_STRCO</name>
<feature type="chain" id="PRO_0000152265" description="Uncharacterized protein SCO2128">
    <location>
        <begin position="1"/>
        <end position="390"/>
    </location>
</feature>
<organism>
    <name type="scientific">Streptomyces coelicolor (strain ATCC BAA-471 / A3(2) / M145)</name>
    <dbReference type="NCBI Taxonomy" id="100226"/>
    <lineage>
        <taxon>Bacteria</taxon>
        <taxon>Bacillati</taxon>
        <taxon>Actinomycetota</taxon>
        <taxon>Actinomycetes</taxon>
        <taxon>Kitasatosporales</taxon>
        <taxon>Streptomycetaceae</taxon>
        <taxon>Streptomyces</taxon>
        <taxon>Streptomyces albidoflavus group</taxon>
    </lineage>
</organism>
<sequence length="390" mass="41221">MRTLLITGPGGTGRTTVAAATALTAARQGTRTLVLGTDRDDTLGAALGVRTGPAPTSVEPGLTAWRPDAAQGFRDALAALQDRAASALDLLGAARLDPQELTPLPGADDLALLRALREAALAEAHDLLVVDLPPAPRALALLAAPEELRRALRRLLPPERQAARALRPVLGRLAGVPMPTEALYEAAARWDLELAAAESVLADRNTVVRLVAEPGPAGADAVRTTTLGLALRGLRTDLLVANRVLPEDTPADSWLSGPLAQQRKTLEEWRGAYDVRAVAHLGHDPRGTDDLAALAVPGVNPDASPVEWPVTDRLAEDGVLVWHIPLPGAVREELDLVRRGDELAVAAGPFRRTVPLPSALRRCTVDGAALRDGTLAVRFAPDPELWPRGR</sequence>
<proteinExistence type="inferred from homology"/>
<evidence type="ECO:0000305" key="1"/>
<comment type="similarity">
    <text evidence="1">Belongs to the arsA ATPase family.</text>
</comment>
<comment type="sequence caution" evidence="1">
    <conflict type="erroneous initiation">
        <sequence resource="EMBL-CDS" id="CAD55294"/>
    </conflict>
</comment>
<gene>
    <name type="ordered locus">SCO2128</name>
    <name type="ORF">SC6E10.22c</name>
    <name type="ORF">SC6G10.01c</name>
</gene>